<keyword id="KW-0539">Nucleus</keyword>
<keyword id="KW-1185">Reference proteome</keyword>
<keyword id="KW-0677">Repeat</keyword>
<keyword id="KW-0819">tRNA processing</keyword>
<keyword id="KW-0853">WD repeat</keyword>
<comment type="function">
    <text evidence="1">Non-catalytic component of the METTL1-WDR4 methyltransferase complex required for the formation of N(7)-methylguanine in a subset of RNA species, such as tRNAs, mRNAs and microRNAs (miRNAs). In the METTL1-WDR4 methyltransferase complex, wdr4 acts as a scaffold for tRNA-binding. Required for the formation of N(7)-methylguanine at position 46 (m7G46) in a large subset of tRNAs that contain the 5'-RAGGU-3' motif within the variable loop. M7G46 interacts with C13-G22 in the D-loop to stabilize tRNA tertiary structure and protect tRNAs from decay. Also required for the formation of N(7)-methylguanine at internal sites in a subset of mRNAs. Also required for methylation of a specific subset of miRNAs.</text>
</comment>
<comment type="pathway">
    <text evidence="1">tRNA modification; N(7)-methylguanine-tRNA biosynthesis.</text>
</comment>
<comment type="subunit">
    <text evidence="1">Non-catalytic component of the METTL1-WDR4 complex, composed of mettl1 and wdr4.</text>
</comment>
<comment type="subcellular location">
    <subcellularLocation>
        <location evidence="1">Nucleus</location>
    </subcellularLocation>
</comment>
<comment type="similarity">
    <text evidence="1">Belongs to the WD repeat TRM82 family.</text>
</comment>
<comment type="sequence caution" evidence="2">
    <conflict type="erroneous initiation">
        <sequence resource="EMBL-CDS" id="AAH43907"/>
    </conflict>
</comment>
<organism>
    <name type="scientific">Xenopus laevis</name>
    <name type="common">African clawed frog</name>
    <dbReference type="NCBI Taxonomy" id="8355"/>
    <lineage>
        <taxon>Eukaryota</taxon>
        <taxon>Metazoa</taxon>
        <taxon>Chordata</taxon>
        <taxon>Craniata</taxon>
        <taxon>Vertebrata</taxon>
        <taxon>Euteleostomi</taxon>
        <taxon>Amphibia</taxon>
        <taxon>Batrachia</taxon>
        <taxon>Anura</taxon>
        <taxon>Pipoidea</taxon>
        <taxon>Pipidae</taxon>
        <taxon>Xenopodinae</taxon>
        <taxon>Xenopus</taxon>
        <taxon>Xenopus</taxon>
    </lineage>
</organism>
<proteinExistence type="evidence at transcript level"/>
<evidence type="ECO:0000255" key="1">
    <source>
        <dbReference type="HAMAP-Rule" id="MF_03056"/>
    </source>
</evidence>
<evidence type="ECO:0000305" key="2"/>
<dbReference type="EMBL" id="BC043907">
    <property type="protein sequence ID" value="AAH43907.1"/>
    <property type="status" value="ALT_INIT"/>
    <property type="molecule type" value="mRNA"/>
</dbReference>
<dbReference type="RefSeq" id="NP_001080508.1">
    <property type="nucleotide sequence ID" value="NM_001087039.1"/>
</dbReference>
<dbReference type="SMR" id="Q7ZY78"/>
<dbReference type="DNASU" id="380200"/>
<dbReference type="GeneID" id="380200"/>
<dbReference type="KEGG" id="xla:380200"/>
<dbReference type="AGR" id="Xenbase:XB-GENE-6253924"/>
<dbReference type="CTD" id="380200"/>
<dbReference type="Xenbase" id="XB-GENE-6253924">
    <property type="gene designation" value="wdr4.S"/>
</dbReference>
<dbReference type="OrthoDB" id="371245at2759"/>
<dbReference type="UniPathway" id="UPA00989"/>
<dbReference type="Proteomes" id="UP000186698">
    <property type="component" value="Chromosome 2S"/>
</dbReference>
<dbReference type="Bgee" id="380200">
    <property type="expression patterns" value="Expressed in oocyte and 19 other cell types or tissues"/>
</dbReference>
<dbReference type="GO" id="GO:0005829">
    <property type="term" value="C:cytosol"/>
    <property type="evidence" value="ECO:0000318"/>
    <property type="project" value="GO_Central"/>
</dbReference>
<dbReference type="GO" id="GO:0005634">
    <property type="term" value="C:nucleus"/>
    <property type="evidence" value="ECO:0000250"/>
    <property type="project" value="UniProtKB"/>
</dbReference>
<dbReference type="GO" id="GO:0106143">
    <property type="term" value="C:tRNA (m7G46) methyltransferase complex"/>
    <property type="evidence" value="ECO:0000250"/>
    <property type="project" value="UniProtKB"/>
</dbReference>
<dbReference type="GO" id="GO:0043527">
    <property type="term" value="C:tRNA methyltransferase complex"/>
    <property type="evidence" value="ECO:0000250"/>
    <property type="project" value="UniProtKB"/>
</dbReference>
<dbReference type="GO" id="GO:0008047">
    <property type="term" value="F:enzyme activator activity"/>
    <property type="evidence" value="ECO:0000250"/>
    <property type="project" value="UniProtKB"/>
</dbReference>
<dbReference type="GO" id="GO:0106004">
    <property type="term" value="P:tRNA (guanine-N7)-methylation"/>
    <property type="evidence" value="ECO:0000250"/>
    <property type="project" value="UniProtKB"/>
</dbReference>
<dbReference type="GO" id="GO:0006400">
    <property type="term" value="P:tRNA modification"/>
    <property type="evidence" value="ECO:0000250"/>
    <property type="project" value="UniProtKB"/>
</dbReference>
<dbReference type="FunFam" id="2.130.10.10:FF:002624">
    <property type="entry name" value="tRNA (guanine-N(7)-)-methyltransferase non-catalytic subunit wdr4"/>
    <property type="match status" value="1"/>
</dbReference>
<dbReference type="Gene3D" id="2.130.10.10">
    <property type="entry name" value="YVTN repeat-like/Quinoprotein amine dehydrogenase"/>
    <property type="match status" value="1"/>
</dbReference>
<dbReference type="HAMAP" id="MF_03056">
    <property type="entry name" value="TRM82"/>
    <property type="match status" value="1"/>
</dbReference>
<dbReference type="InterPro" id="IPR028884">
    <property type="entry name" value="Trm82"/>
</dbReference>
<dbReference type="InterPro" id="IPR015943">
    <property type="entry name" value="WD40/YVTN_repeat-like_dom_sf"/>
</dbReference>
<dbReference type="InterPro" id="IPR036322">
    <property type="entry name" value="WD40_repeat_dom_sf"/>
</dbReference>
<dbReference type="InterPro" id="IPR001680">
    <property type="entry name" value="WD40_rpt"/>
</dbReference>
<dbReference type="PANTHER" id="PTHR16288:SF0">
    <property type="entry name" value="TRNA (GUANINE-N(7)-)-METHYLTRANSFERASE NON-CATALYTIC SUBUNIT WDR4"/>
    <property type="match status" value="1"/>
</dbReference>
<dbReference type="PANTHER" id="PTHR16288">
    <property type="entry name" value="WD40 REPEAT PROTEIN 4"/>
    <property type="match status" value="1"/>
</dbReference>
<dbReference type="Pfam" id="PF00400">
    <property type="entry name" value="WD40"/>
    <property type="match status" value="1"/>
</dbReference>
<dbReference type="SMART" id="SM00320">
    <property type="entry name" value="WD40"/>
    <property type="match status" value="4"/>
</dbReference>
<dbReference type="SUPFAM" id="SSF50978">
    <property type="entry name" value="WD40 repeat-like"/>
    <property type="match status" value="1"/>
</dbReference>
<dbReference type="PROSITE" id="PS50082">
    <property type="entry name" value="WD_REPEATS_2"/>
    <property type="match status" value="1"/>
</dbReference>
<dbReference type="PROSITE" id="PS50294">
    <property type="entry name" value="WD_REPEATS_REGION"/>
    <property type="match status" value="1"/>
</dbReference>
<feature type="chain" id="PRO_0000370534" description="tRNA (guanine-N(7)-)-methyltransferase non-catalytic subunit wdr4">
    <location>
        <begin position="1"/>
        <end position="396"/>
    </location>
</feature>
<feature type="repeat" description="WD 1">
    <location>
        <begin position="52"/>
        <end position="91"/>
    </location>
</feature>
<feature type="repeat" description="WD 2">
    <location>
        <begin position="94"/>
        <end position="133"/>
    </location>
</feature>
<feature type="repeat" description="WD 3">
    <location>
        <begin position="137"/>
        <end position="178"/>
    </location>
</feature>
<feature type="repeat" description="WD 4">
    <location>
        <begin position="180"/>
        <end position="220"/>
    </location>
</feature>
<name>WDR4_XENLA</name>
<reference key="1">
    <citation type="submission" date="2003-01" db="EMBL/GenBank/DDBJ databases">
        <authorList>
            <consortium name="NIH - Xenopus Gene Collection (XGC) project"/>
        </authorList>
    </citation>
    <scope>NUCLEOTIDE SEQUENCE [LARGE SCALE MRNA]</scope>
    <source>
        <tissue>Embryo</tissue>
    </source>
</reference>
<protein>
    <recommendedName>
        <fullName evidence="1">tRNA (guanine-N(7)-)-methyltransferase non-catalytic subunit wdr4</fullName>
    </recommendedName>
    <alternativeName>
        <fullName evidence="1">WD repeat-containing protein 4</fullName>
    </alternativeName>
</protein>
<gene>
    <name type="primary">wdr4</name>
</gene>
<sequence>MLRVGPGSLAITGGSRLLGHRVGSECCPFHLDCSLLEKQSAAPGQEGSADSHGSDKILAAAFSPSGEYFALTDDNKRLVLFRTKPAWEKISVRWVSRRCTALTFSPCGNHILVADKSGDVFSFSVPRALEQGRLELGHLSMLLDVTVSLDGKHIITCDRDEKIRVSCWGAPHVIMSFCLGHTEFVSQLLPLPGQEKLLLSGSGDGTLRLWEYESGKEVHSVTLRSLAHELEDQENKRFAVSRISCCSCNGIQLAVLCEGVPGIFLFSVSPEPRLTFTQYIALTHTPIDLDFDGSAFLWVLSGVREEPLLKYKELDDQWQSVSNDEELTRLTGIIQENWGDLEGAGAPESRFVGLYKAVFDNMATYLQKKELRLESEKRKAADGQVVLASKVQKTES</sequence>
<accession>Q7ZY78</accession>